<reference key="1">
    <citation type="journal article" date="1994" name="J. Mol. Cell. Cardiol.">
        <title>Molecular cloning of two human cardiac gap junction proteins, connexin40 and connexin45.</title>
        <authorList>
            <person name="Kanter H.L."/>
            <person name="Saffitz J.E."/>
            <person name="Beyer E.C."/>
        </authorList>
    </citation>
    <scope>NUCLEOTIDE SEQUENCE [GENOMIC DNA]</scope>
</reference>
<reference key="2">
    <citation type="journal article" date="2004" name="Nat. Genet.">
        <title>Complete sequencing and characterization of 21,243 full-length human cDNAs.</title>
        <authorList>
            <person name="Ota T."/>
            <person name="Suzuki Y."/>
            <person name="Nishikawa T."/>
            <person name="Otsuki T."/>
            <person name="Sugiyama T."/>
            <person name="Irie R."/>
            <person name="Wakamatsu A."/>
            <person name="Hayashi K."/>
            <person name="Sato H."/>
            <person name="Nagai K."/>
            <person name="Kimura K."/>
            <person name="Makita H."/>
            <person name="Sekine M."/>
            <person name="Obayashi M."/>
            <person name="Nishi T."/>
            <person name="Shibahara T."/>
            <person name="Tanaka T."/>
            <person name="Ishii S."/>
            <person name="Yamamoto J."/>
            <person name="Saito K."/>
            <person name="Kawai Y."/>
            <person name="Isono Y."/>
            <person name="Nakamura Y."/>
            <person name="Nagahari K."/>
            <person name="Murakami K."/>
            <person name="Yasuda T."/>
            <person name="Iwayanagi T."/>
            <person name="Wagatsuma M."/>
            <person name="Shiratori A."/>
            <person name="Sudo H."/>
            <person name="Hosoiri T."/>
            <person name="Kaku Y."/>
            <person name="Kodaira H."/>
            <person name="Kondo H."/>
            <person name="Sugawara M."/>
            <person name="Takahashi M."/>
            <person name="Kanda K."/>
            <person name="Yokoi T."/>
            <person name="Furuya T."/>
            <person name="Kikkawa E."/>
            <person name="Omura Y."/>
            <person name="Abe K."/>
            <person name="Kamihara K."/>
            <person name="Katsuta N."/>
            <person name="Sato K."/>
            <person name="Tanikawa M."/>
            <person name="Yamazaki M."/>
            <person name="Ninomiya K."/>
            <person name="Ishibashi T."/>
            <person name="Yamashita H."/>
            <person name="Murakawa K."/>
            <person name="Fujimori K."/>
            <person name="Tanai H."/>
            <person name="Kimata M."/>
            <person name="Watanabe M."/>
            <person name="Hiraoka S."/>
            <person name="Chiba Y."/>
            <person name="Ishida S."/>
            <person name="Ono Y."/>
            <person name="Takiguchi S."/>
            <person name="Watanabe S."/>
            <person name="Yosida M."/>
            <person name="Hotuta T."/>
            <person name="Kusano J."/>
            <person name="Kanehori K."/>
            <person name="Takahashi-Fujii A."/>
            <person name="Hara H."/>
            <person name="Tanase T.-O."/>
            <person name="Nomura Y."/>
            <person name="Togiya S."/>
            <person name="Komai F."/>
            <person name="Hara R."/>
            <person name="Takeuchi K."/>
            <person name="Arita M."/>
            <person name="Imose N."/>
            <person name="Musashino K."/>
            <person name="Yuuki H."/>
            <person name="Oshima A."/>
            <person name="Sasaki N."/>
            <person name="Aotsuka S."/>
            <person name="Yoshikawa Y."/>
            <person name="Matsunawa H."/>
            <person name="Ichihara T."/>
            <person name="Shiohata N."/>
            <person name="Sano S."/>
            <person name="Moriya S."/>
            <person name="Momiyama H."/>
            <person name="Satoh N."/>
            <person name="Takami S."/>
            <person name="Terashima Y."/>
            <person name="Suzuki O."/>
            <person name="Nakagawa S."/>
            <person name="Senoh A."/>
            <person name="Mizoguchi H."/>
            <person name="Goto Y."/>
            <person name="Shimizu F."/>
            <person name="Wakebe H."/>
            <person name="Hishigaki H."/>
            <person name="Watanabe T."/>
            <person name="Sugiyama A."/>
            <person name="Takemoto M."/>
            <person name="Kawakami B."/>
            <person name="Yamazaki M."/>
            <person name="Watanabe K."/>
            <person name="Kumagai A."/>
            <person name="Itakura S."/>
            <person name="Fukuzumi Y."/>
            <person name="Fujimori Y."/>
            <person name="Komiyama M."/>
            <person name="Tashiro H."/>
            <person name="Tanigami A."/>
            <person name="Fujiwara T."/>
            <person name="Ono T."/>
            <person name="Yamada K."/>
            <person name="Fujii Y."/>
            <person name="Ozaki K."/>
            <person name="Hirao M."/>
            <person name="Ohmori Y."/>
            <person name="Kawabata A."/>
            <person name="Hikiji T."/>
            <person name="Kobatake N."/>
            <person name="Inagaki H."/>
            <person name="Ikema Y."/>
            <person name="Okamoto S."/>
            <person name="Okitani R."/>
            <person name="Kawakami T."/>
            <person name="Noguchi S."/>
            <person name="Itoh T."/>
            <person name="Shigeta K."/>
            <person name="Senba T."/>
            <person name="Matsumura K."/>
            <person name="Nakajima Y."/>
            <person name="Mizuno T."/>
            <person name="Morinaga M."/>
            <person name="Sasaki M."/>
            <person name="Togashi T."/>
            <person name="Oyama M."/>
            <person name="Hata H."/>
            <person name="Watanabe M."/>
            <person name="Komatsu T."/>
            <person name="Mizushima-Sugano J."/>
            <person name="Satoh T."/>
            <person name="Shirai Y."/>
            <person name="Takahashi Y."/>
            <person name="Nakagawa K."/>
            <person name="Okumura K."/>
            <person name="Nagase T."/>
            <person name="Nomura N."/>
            <person name="Kikuchi H."/>
            <person name="Masuho Y."/>
            <person name="Yamashita R."/>
            <person name="Nakai K."/>
            <person name="Yada T."/>
            <person name="Nakamura Y."/>
            <person name="Ohara O."/>
            <person name="Isogai T."/>
            <person name="Sugano S."/>
        </authorList>
    </citation>
    <scope>NUCLEOTIDE SEQUENCE [LARGE SCALE MRNA]</scope>
    <source>
        <tissue>Uterus</tissue>
    </source>
</reference>
<reference key="3">
    <citation type="journal article" date="2006" name="Nature">
        <title>DNA sequence of human chromosome 17 and analysis of rearrangement in the human lineage.</title>
        <authorList>
            <person name="Zody M.C."/>
            <person name="Garber M."/>
            <person name="Adams D.J."/>
            <person name="Sharpe T."/>
            <person name="Harrow J."/>
            <person name="Lupski J.R."/>
            <person name="Nicholson C."/>
            <person name="Searle S.M."/>
            <person name="Wilming L."/>
            <person name="Young S.K."/>
            <person name="Abouelleil A."/>
            <person name="Allen N.R."/>
            <person name="Bi W."/>
            <person name="Bloom T."/>
            <person name="Borowsky M.L."/>
            <person name="Bugalter B.E."/>
            <person name="Butler J."/>
            <person name="Chang J.L."/>
            <person name="Chen C.-K."/>
            <person name="Cook A."/>
            <person name="Corum B."/>
            <person name="Cuomo C.A."/>
            <person name="de Jong P.J."/>
            <person name="DeCaprio D."/>
            <person name="Dewar K."/>
            <person name="FitzGerald M."/>
            <person name="Gilbert J."/>
            <person name="Gibson R."/>
            <person name="Gnerre S."/>
            <person name="Goldstein S."/>
            <person name="Grafham D.V."/>
            <person name="Grocock R."/>
            <person name="Hafez N."/>
            <person name="Hagopian D.S."/>
            <person name="Hart E."/>
            <person name="Norman C.H."/>
            <person name="Humphray S."/>
            <person name="Jaffe D.B."/>
            <person name="Jones M."/>
            <person name="Kamal M."/>
            <person name="Khodiyar V.K."/>
            <person name="LaButti K."/>
            <person name="Laird G."/>
            <person name="Lehoczky J."/>
            <person name="Liu X."/>
            <person name="Lokyitsang T."/>
            <person name="Loveland J."/>
            <person name="Lui A."/>
            <person name="Macdonald P."/>
            <person name="Major J.E."/>
            <person name="Matthews L."/>
            <person name="Mauceli E."/>
            <person name="McCarroll S.A."/>
            <person name="Mihalev A.H."/>
            <person name="Mudge J."/>
            <person name="Nguyen C."/>
            <person name="Nicol R."/>
            <person name="O'Leary S.B."/>
            <person name="Osoegawa K."/>
            <person name="Schwartz D.C."/>
            <person name="Shaw-Smith C."/>
            <person name="Stankiewicz P."/>
            <person name="Steward C."/>
            <person name="Swarbreck D."/>
            <person name="Venkataraman V."/>
            <person name="Whittaker C.A."/>
            <person name="Yang X."/>
            <person name="Zimmer A.R."/>
            <person name="Bradley A."/>
            <person name="Hubbard T."/>
            <person name="Birren B.W."/>
            <person name="Rogers J."/>
            <person name="Lander E.S."/>
            <person name="Nusbaum C."/>
        </authorList>
    </citation>
    <scope>NUCLEOTIDE SEQUENCE [LARGE SCALE GENOMIC DNA]</scope>
</reference>
<reference key="4">
    <citation type="journal article" date="2004" name="Genome Res.">
        <title>The status, quality, and expansion of the NIH full-length cDNA project: the Mammalian Gene Collection (MGC).</title>
        <authorList>
            <consortium name="The MGC Project Team"/>
        </authorList>
    </citation>
    <scope>NUCLEOTIDE SEQUENCE [LARGE SCALE MRNA]</scope>
</reference>
<accession>P36383</accession>
<accession>B3KW68</accession>
<accession>Q4VAY0</accession>
<protein>
    <recommendedName>
        <fullName>Gap junction gamma-1 protein</fullName>
    </recommendedName>
    <alternativeName>
        <fullName>Connexin-45</fullName>
        <shortName>Cx45</shortName>
    </alternativeName>
    <alternativeName>
        <fullName>Gap junction alpha-7 protein</fullName>
    </alternativeName>
</protein>
<organism>
    <name type="scientific">Homo sapiens</name>
    <name type="common">Human</name>
    <dbReference type="NCBI Taxonomy" id="9606"/>
    <lineage>
        <taxon>Eukaryota</taxon>
        <taxon>Metazoa</taxon>
        <taxon>Chordata</taxon>
        <taxon>Craniata</taxon>
        <taxon>Vertebrata</taxon>
        <taxon>Euteleostomi</taxon>
        <taxon>Mammalia</taxon>
        <taxon>Eutheria</taxon>
        <taxon>Euarchontoglires</taxon>
        <taxon>Primates</taxon>
        <taxon>Haplorrhini</taxon>
        <taxon>Catarrhini</taxon>
        <taxon>Hominidae</taxon>
        <taxon>Homo</taxon>
    </lineage>
</organism>
<keyword id="KW-0002">3D-structure</keyword>
<keyword id="KW-0965">Cell junction</keyword>
<keyword id="KW-1003">Cell membrane</keyword>
<keyword id="KW-0303">Gap junction</keyword>
<keyword id="KW-0472">Membrane</keyword>
<keyword id="KW-1267">Proteomics identification</keyword>
<keyword id="KW-1185">Reference proteome</keyword>
<keyword id="KW-0812">Transmembrane</keyword>
<keyword id="KW-1133">Transmembrane helix</keyword>
<evidence type="ECO:0000250" key="1"/>
<evidence type="ECO:0000255" key="2"/>
<evidence type="ECO:0000256" key="3">
    <source>
        <dbReference type="SAM" id="MobiDB-lite"/>
    </source>
</evidence>
<evidence type="ECO:0000305" key="4"/>
<dbReference type="EMBL" id="U03493">
    <property type="protein sequence ID" value="AAA60458.1"/>
    <property type="molecule type" value="Genomic_DNA"/>
</dbReference>
<dbReference type="EMBL" id="AK124339">
    <property type="protein sequence ID" value="BAG54030.1"/>
    <property type="molecule type" value="mRNA"/>
</dbReference>
<dbReference type="EMBL" id="AC005180">
    <property type="status" value="NOT_ANNOTATED_CDS"/>
    <property type="molecule type" value="Genomic_DNA"/>
</dbReference>
<dbReference type="EMBL" id="BC096213">
    <property type="protein sequence ID" value="AAH96213.1"/>
    <property type="molecule type" value="mRNA"/>
</dbReference>
<dbReference type="EMBL" id="BC096214">
    <property type="protein sequence ID" value="AAH96214.1"/>
    <property type="molecule type" value="mRNA"/>
</dbReference>
<dbReference type="EMBL" id="BC096215">
    <property type="protein sequence ID" value="AAH96215.1"/>
    <property type="molecule type" value="mRNA"/>
</dbReference>
<dbReference type="EMBL" id="BC096216">
    <property type="protein sequence ID" value="AAH96216.1"/>
    <property type="molecule type" value="mRNA"/>
</dbReference>
<dbReference type="CCDS" id="CCDS11487.1"/>
<dbReference type="PIR" id="I38430">
    <property type="entry name" value="I38430"/>
</dbReference>
<dbReference type="RefSeq" id="NP_001073852.1">
    <property type="nucleotide sequence ID" value="NM_001080383.2"/>
</dbReference>
<dbReference type="RefSeq" id="NP_005488.2">
    <property type="nucleotide sequence ID" value="NM_005497.4"/>
</dbReference>
<dbReference type="RefSeq" id="XP_005256977.1">
    <property type="nucleotide sequence ID" value="XM_005256920.1"/>
</dbReference>
<dbReference type="RefSeq" id="XP_005256978.1">
    <property type="nucleotide sequence ID" value="XM_005256921.1"/>
</dbReference>
<dbReference type="RefSeq" id="XP_024306294.1">
    <property type="nucleotide sequence ID" value="XM_024450526.1"/>
</dbReference>
<dbReference type="RefSeq" id="XP_024306295.1">
    <property type="nucleotide sequence ID" value="XM_024450527.2"/>
</dbReference>
<dbReference type="RefSeq" id="XP_047291033.1">
    <property type="nucleotide sequence ID" value="XM_047435077.1"/>
</dbReference>
<dbReference type="RefSeq" id="XP_047291034.1">
    <property type="nucleotide sequence ID" value="XM_047435078.1"/>
</dbReference>
<dbReference type="RefSeq" id="XP_047291035.1">
    <property type="nucleotide sequence ID" value="XM_047435079.1"/>
</dbReference>
<dbReference type="RefSeq" id="XP_047291036.1">
    <property type="nucleotide sequence ID" value="XM_047435080.1"/>
</dbReference>
<dbReference type="RefSeq" id="XP_054170614.1">
    <property type="nucleotide sequence ID" value="XM_054314639.1"/>
</dbReference>
<dbReference type="RefSeq" id="XP_054170615.1">
    <property type="nucleotide sequence ID" value="XM_054314640.1"/>
</dbReference>
<dbReference type="RefSeq" id="XP_054170616.1">
    <property type="nucleotide sequence ID" value="XM_054314641.1"/>
</dbReference>
<dbReference type="RefSeq" id="XP_054170617.1">
    <property type="nucleotide sequence ID" value="XM_054314642.1"/>
</dbReference>
<dbReference type="RefSeq" id="XP_054170618.1">
    <property type="nucleotide sequence ID" value="XM_054314643.1"/>
</dbReference>
<dbReference type="RefSeq" id="XP_054170619.1">
    <property type="nucleotide sequence ID" value="XM_054314644.1"/>
</dbReference>
<dbReference type="PDB" id="3SHW">
    <property type="method" value="X-ray"/>
    <property type="resolution" value="2.90 A"/>
    <property type="chains" value="B=387-396"/>
</dbReference>
<dbReference type="PDBsum" id="3SHW"/>
<dbReference type="SMR" id="P36383"/>
<dbReference type="BioGRID" id="115363">
    <property type="interactions" value="45"/>
</dbReference>
<dbReference type="ELM" id="P36383"/>
<dbReference type="FunCoup" id="P36383">
    <property type="interactions" value="48"/>
</dbReference>
<dbReference type="IntAct" id="P36383">
    <property type="interactions" value="26"/>
</dbReference>
<dbReference type="MINT" id="P36383"/>
<dbReference type="STRING" id="9606.ENSP00000467201"/>
<dbReference type="TCDB" id="1.A.24.2.4">
    <property type="family name" value="the gap junction-forming connexin (connexin) family"/>
</dbReference>
<dbReference type="iPTMnet" id="P36383"/>
<dbReference type="PhosphoSitePlus" id="P36383"/>
<dbReference type="BioMuta" id="GJC1"/>
<dbReference type="DMDM" id="226693517"/>
<dbReference type="jPOST" id="P36383"/>
<dbReference type="MassIVE" id="P36383"/>
<dbReference type="PaxDb" id="9606-ENSP00000411528"/>
<dbReference type="PeptideAtlas" id="P36383"/>
<dbReference type="ProteomicsDB" id="55181"/>
<dbReference type="Pumba" id="P36383"/>
<dbReference type="Antibodypedia" id="29882">
    <property type="antibodies" value="349 antibodies from 34 providers"/>
</dbReference>
<dbReference type="DNASU" id="10052"/>
<dbReference type="Ensembl" id="ENST00000330514.4">
    <property type="protein sequence ID" value="ENSP00000333193.3"/>
    <property type="gene ID" value="ENSG00000182963.11"/>
</dbReference>
<dbReference type="Ensembl" id="ENST00000590758.3">
    <property type="protein sequence ID" value="ENSP00000466339.1"/>
    <property type="gene ID" value="ENSG00000182963.11"/>
</dbReference>
<dbReference type="Ensembl" id="ENST00000592524.6">
    <property type="protein sequence ID" value="ENSP00000467201.1"/>
    <property type="gene ID" value="ENSG00000182963.11"/>
</dbReference>
<dbReference type="GeneID" id="10052"/>
<dbReference type="KEGG" id="hsa:10052"/>
<dbReference type="MANE-Select" id="ENST00000592524.6">
    <property type="protein sequence ID" value="ENSP00000467201.1"/>
    <property type="RefSeq nucleotide sequence ID" value="NM_005497.4"/>
    <property type="RefSeq protein sequence ID" value="NP_005488.2"/>
</dbReference>
<dbReference type="UCSC" id="uc002ihj.4">
    <property type="organism name" value="human"/>
</dbReference>
<dbReference type="AGR" id="HGNC:4280"/>
<dbReference type="CTD" id="10052"/>
<dbReference type="DisGeNET" id="10052"/>
<dbReference type="GeneCards" id="GJC1"/>
<dbReference type="HGNC" id="HGNC:4280">
    <property type="gene designation" value="GJC1"/>
</dbReference>
<dbReference type="HPA" id="ENSG00000182963">
    <property type="expression patterns" value="Tissue enhanced (placenta, smooth muscle)"/>
</dbReference>
<dbReference type="MalaCards" id="GJC1"/>
<dbReference type="MIM" id="608655">
    <property type="type" value="gene"/>
</dbReference>
<dbReference type="neXtProt" id="NX_P36383"/>
<dbReference type="OpenTargets" id="ENSG00000182963"/>
<dbReference type="PharmGKB" id="PA164741588"/>
<dbReference type="VEuPathDB" id="HostDB:ENSG00000182963"/>
<dbReference type="eggNOG" id="ENOG502QV2G">
    <property type="taxonomic scope" value="Eukaryota"/>
</dbReference>
<dbReference type="GeneTree" id="ENSGT01130000278276"/>
<dbReference type="HOGENOM" id="CLU_037388_0_0_1"/>
<dbReference type="InParanoid" id="P36383"/>
<dbReference type="OMA" id="VRWKQHR"/>
<dbReference type="OrthoDB" id="8875898at2759"/>
<dbReference type="PAN-GO" id="P36383">
    <property type="GO annotations" value="3 GO annotations based on evolutionary models"/>
</dbReference>
<dbReference type="PhylomeDB" id="P36383"/>
<dbReference type="TreeFam" id="TF329606"/>
<dbReference type="PathwayCommons" id="P36383"/>
<dbReference type="Reactome" id="R-HSA-112303">
    <property type="pathway name" value="Electric Transmission Across Gap Junctions"/>
</dbReference>
<dbReference type="Reactome" id="R-HSA-190861">
    <property type="pathway name" value="Gap junction assembly"/>
</dbReference>
<dbReference type="SignaLink" id="P36383"/>
<dbReference type="BioGRID-ORCS" id="10052">
    <property type="hits" value="27 hits in 1155 CRISPR screens"/>
</dbReference>
<dbReference type="ChiTaRS" id="GJC1">
    <property type="organism name" value="human"/>
</dbReference>
<dbReference type="EvolutionaryTrace" id="P36383"/>
<dbReference type="GeneWiki" id="GJC1"/>
<dbReference type="GenomeRNAi" id="10052"/>
<dbReference type="Pharos" id="P36383">
    <property type="development level" value="Tbio"/>
</dbReference>
<dbReference type="PRO" id="PR:P36383"/>
<dbReference type="Proteomes" id="UP000005640">
    <property type="component" value="Chromosome 17"/>
</dbReference>
<dbReference type="RNAct" id="P36383">
    <property type="molecule type" value="protein"/>
</dbReference>
<dbReference type="Bgee" id="ENSG00000182963">
    <property type="expression patterns" value="Expressed in cauda epididymis and 166 other cell types or tissues"/>
</dbReference>
<dbReference type="ExpressionAtlas" id="P36383">
    <property type="expression patterns" value="baseline and differential"/>
</dbReference>
<dbReference type="GO" id="GO:0005922">
    <property type="term" value="C:connexin complex"/>
    <property type="evidence" value="ECO:0000250"/>
    <property type="project" value="BHF-UCL"/>
</dbReference>
<dbReference type="GO" id="GO:0005783">
    <property type="term" value="C:endoplasmic reticulum"/>
    <property type="evidence" value="ECO:0000314"/>
    <property type="project" value="HPA"/>
</dbReference>
<dbReference type="GO" id="GO:0005789">
    <property type="term" value="C:endoplasmic reticulum membrane"/>
    <property type="evidence" value="ECO:0000304"/>
    <property type="project" value="Reactome"/>
</dbReference>
<dbReference type="GO" id="GO:0005921">
    <property type="term" value="C:gap junction"/>
    <property type="evidence" value="ECO:0000304"/>
    <property type="project" value="ProtInc"/>
</dbReference>
<dbReference type="GO" id="GO:0014704">
    <property type="term" value="C:intercalated disc"/>
    <property type="evidence" value="ECO:0000304"/>
    <property type="project" value="BHF-UCL"/>
</dbReference>
<dbReference type="GO" id="GO:0005654">
    <property type="term" value="C:nucleoplasm"/>
    <property type="evidence" value="ECO:0000314"/>
    <property type="project" value="HPA"/>
</dbReference>
<dbReference type="GO" id="GO:0005886">
    <property type="term" value="C:plasma membrane"/>
    <property type="evidence" value="ECO:0000314"/>
    <property type="project" value="HPA"/>
</dbReference>
<dbReference type="GO" id="GO:0045202">
    <property type="term" value="C:synapse"/>
    <property type="evidence" value="ECO:0007669"/>
    <property type="project" value="GOC"/>
</dbReference>
<dbReference type="GO" id="GO:0005243">
    <property type="term" value="F:gap junction channel activity"/>
    <property type="evidence" value="ECO:0000318"/>
    <property type="project" value="GO_Central"/>
</dbReference>
<dbReference type="GO" id="GO:0086077">
    <property type="term" value="F:gap junction channel activity involved in AV node cell-bundle of His cell electrical coupling"/>
    <property type="evidence" value="ECO:0000250"/>
    <property type="project" value="BHF-UCL"/>
</dbReference>
<dbReference type="GO" id="GO:0086020">
    <property type="term" value="F:gap junction channel activity involved in SA node cell-atrial cardiac muscle cell electrical coupling"/>
    <property type="evidence" value="ECO:0000303"/>
    <property type="project" value="BHF-UCL"/>
</dbReference>
<dbReference type="GO" id="GO:0005216">
    <property type="term" value="F:monoatomic ion channel activity"/>
    <property type="evidence" value="ECO:0007669"/>
    <property type="project" value="Ensembl"/>
</dbReference>
<dbReference type="GO" id="GO:0086014">
    <property type="term" value="P:atrial cardiac muscle cell action potential"/>
    <property type="evidence" value="ECO:0000304"/>
    <property type="project" value="BHF-UCL"/>
</dbReference>
<dbReference type="GO" id="GO:0086053">
    <property type="term" value="P:AV node cell to bundle of His cell communication by electrical coupling"/>
    <property type="evidence" value="ECO:0000250"/>
    <property type="project" value="BHF-UCL"/>
</dbReference>
<dbReference type="GO" id="GO:0048738">
    <property type="term" value="P:cardiac muscle tissue development"/>
    <property type="evidence" value="ECO:0007669"/>
    <property type="project" value="Ensembl"/>
</dbReference>
<dbReference type="GO" id="GO:0048468">
    <property type="term" value="P:cell development"/>
    <property type="evidence" value="ECO:0007669"/>
    <property type="project" value="Ensembl"/>
</dbReference>
<dbReference type="GO" id="GO:0007043">
    <property type="term" value="P:cell-cell junction assembly"/>
    <property type="evidence" value="ECO:0000304"/>
    <property type="project" value="ProtInc"/>
</dbReference>
<dbReference type="GO" id="GO:0007267">
    <property type="term" value="P:cell-cell signaling"/>
    <property type="evidence" value="ECO:0000318"/>
    <property type="project" value="GO_Central"/>
</dbReference>
<dbReference type="GO" id="GO:0007268">
    <property type="term" value="P:chemical synaptic transmission"/>
    <property type="evidence" value="ECO:0007669"/>
    <property type="project" value="Ensembl"/>
</dbReference>
<dbReference type="GO" id="GO:0016264">
    <property type="term" value="P:gap junction assembly"/>
    <property type="evidence" value="ECO:0000250"/>
    <property type="project" value="BHF-UCL"/>
</dbReference>
<dbReference type="GO" id="GO:0006936">
    <property type="term" value="P:muscle contraction"/>
    <property type="evidence" value="ECO:0000304"/>
    <property type="project" value="ProtInc"/>
</dbReference>
<dbReference type="GO" id="GO:0086021">
    <property type="term" value="P:SA node cell to atrial cardiac muscle cell communication by electrical coupling"/>
    <property type="evidence" value="ECO:0000303"/>
    <property type="project" value="BHF-UCL"/>
</dbReference>
<dbReference type="GO" id="GO:0001570">
    <property type="term" value="P:vasculogenesis"/>
    <property type="evidence" value="ECO:0007669"/>
    <property type="project" value="Ensembl"/>
</dbReference>
<dbReference type="GO" id="GO:0007601">
    <property type="term" value="P:visual perception"/>
    <property type="evidence" value="ECO:0007669"/>
    <property type="project" value="Ensembl"/>
</dbReference>
<dbReference type="FunFam" id="1.20.1440.80:FF:000003">
    <property type="entry name" value="Gap junction protein"/>
    <property type="match status" value="1"/>
</dbReference>
<dbReference type="Gene3D" id="1.20.1440.80">
    <property type="entry name" value="Gap junction channel protein cysteine-rich domain"/>
    <property type="match status" value="1"/>
</dbReference>
<dbReference type="InterPro" id="IPR000500">
    <property type="entry name" value="Connexin"/>
</dbReference>
<dbReference type="InterPro" id="IPR002265">
    <property type="entry name" value="Connexin45"/>
</dbReference>
<dbReference type="InterPro" id="IPR019570">
    <property type="entry name" value="Connexin_CCC"/>
</dbReference>
<dbReference type="InterPro" id="IPR017990">
    <property type="entry name" value="Connexin_CS"/>
</dbReference>
<dbReference type="InterPro" id="IPR013092">
    <property type="entry name" value="Connexin_N"/>
</dbReference>
<dbReference type="InterPro" id="IPR038359">
    <property type="entry name" value="Connexin_N_sf"/>
</dbReference>
<dbReference type="PANTHER" id="PTHR11984">
    <property type="entry name" value="CONNEXIN"/>
    <property type="match status" value="1"/>
</dbReference>
<dbReference type="PANTHER" id="PTHR11984:SF6">
    <property type="entry name" value="GAP JUNCTION GAMMA-1 PROTEIN"/>
    <property type="match status" value="1"/>
</dbReference>
<dbReference type="Pfam" id="PF00029">
    <property type="entry name" value="Connexin"/>
    <property type="match status" value="1"/>
</dbReference>
<dbReference type="PRINTS" id="PR00206">
    <property type="entry name" value="CONNEXIN"/>
</dbReference>
<dbReference type="PRINTS" id="PR01136">
    <property type="entry name" value="CONNEXINA6"/>
</dbReference>
<dbReference type="SMART" id="SM00037">
    <property type="entry name" value="CNX"/>
    <property type="match status" value="1"/>
</dbReference>
<dbReference type="SMART" id="SM01089">
    <property type="entry name" value="Connexin_CCC"/>
    <property type="match status" value="1"/>
</dbReference>
<dbReference type="PROSITE" id="PS00407">
    <property type="entry name" value="CONNEXINS_1"/>
    <property type="match status" value="1"/>
</dbReference>
<dbReference type="PROSITE" id="PS00408">
    <property type="entry name" value="CONNEXINS_2"/>
    <property type="match status" value="1"/>
</dbReference>
<comment type="function">
    <text>One gap junction consists of a cluster of closely packed pairs of transmembrane channels, the connexons, through which materials of low MW diffuse from one cell to a neighboring cell.</text>
</comment>
<comment type="subunit">
    <text evidence="1">A connexon is composed of a hexamer of connexins. Interacts with CNST (By similarity).</text>
</comment>
<comment type="interaction">
    <interactant intactId="EBI-11979659">
        <id>P36383</id>
    </interactant>
    <interactant intactId="EBI-11976321">
        <id>O95236-2</id>
        <label>APOL3</label>
    </interactant>
    <organismsDiffer>false</organismsDiffer>
    <experiments>3</experiments>
</comment>
<comment type="interaction">
    <interactant intactId="EBI-11979659">
        <id>P36383</id>
    </interactant>
    <interactant intactId="EBI-16439278">
        <id>Q6FHY5</id>
        <label>MEOX2</label>
    </interactant>
    <organismsDiffer>false</organismsDiffer>
    <experiments>3</experiments>
</comment>
<comment type="interaction">
    <interactant intactId="EBI-11979659">
        <id>P36383</id>
    </interactant>
    <interactant intactId="EBI-12889586">
        <id>Q6ZP29-3</id>
        <label>SLC66A1</label>
    </interactant>
    <organismsDiffer>false</organismsDiffer>
    <experiments>3</experiments>
</comment>
<comment type="interaction">
    <interactant intactId="EBI-11979659">
        <id>P36383</id>
    </interactant>
    <interactant intactId="EBI-12015604">
        <id>Q8N2M4</id>
        <label>TMEM86A</label>
    </interactant>
    <organismsDiffer>false</organismsDiffer>
    <experiments>3</experiments>
</comment>
<comment type="subcellular location">
    <subcellularLocation>
        <location>Cell membrane</location>
        <topology>Multi-pass membrane protein</topology>
    </subcellularLocation>
    <subcellularLocation>
        <location>Cell junction</location>
        <location>Gap junction</location>
    </subcellularLocation>
</comment>
<comment type="similarity">
    <text evidence="4">Belongs to the connexin family. Gamma-type subfamily.</text>
</comment>
<sequence length="396" mass="45470">MSWSFLTRLLEEIHNHSTFVGKIWLTVLIVFRIVLTAVGGESIYYDEQSKFVCNTEQPGCENVCYDAFAPLSHVRFWVFQIILVATPSVMYLGYAIHKIAKMEHGEADKKAARSKPYAMRWKQHRALEETEEDNEEDPMMYPEMELESDKENKEQSQPKPKHDGRRRIREDGLMKIYVLQLLARTVFEVGFLIGQYFLYGFQVHPFYVCSRLPCPHKIDCFISRPTEKTIFLLIMYGVTGLCLLLNIWEMLHLGFGTIRDSLNSKRRELEDPGAYNYPFTWNTPSAPPGYNIAVKPDQIQYTELSNAKIAYKQNKANTAQEQQYGSHEENLPADLEALQREIRMAQERLDLAVQAYSHQNNPHGPREKKAKVGSKAGSNKSTASSKSGDGKTSVWI</sequence>
<proteinExistence type="evidence at protein level"/>
<name>CXG1_HUMAN</name>
<feature type="chain" id="PRO_0000057826" description="Gap junction gamma-1 protein">
    <location>
        <begin position="1"/>
        <end position="396"/>
    </location>
</feature>
<feature type="topological domain" description="Cytoplasmic" evidence="2">
    <location>
        <begin position="1"/>
        <end position="22"/>
    </location>
</feature>
<feature type="transmembrane region" description="Helical" evidence="2">
    <location>
        <begin position="23"/>
        <end position="45"/>
    </location>
</feature>
<feature type="topological domain" description="Extracellular" evidence="2">
    <location>
        <begin position="46"/>
        <end position="75"/>
    </location>
</feature>
<feature type="transmembrane region" description="Helical" evidence="2">
    <location>
        <begin position="76"/>
        <end position="95"/>
    </location>
</feature>
<feature type="topological domain" description="Cytoplasmic" evidence="2">
    <location>
        <begin position="96"/>
        <end position="175"/>
    </location>
</feature>
<feature type="transmembrane region" description="Helical" evidence="2">
    <location>
        <begin position="176"/>
        <end position="198"/>
    </location>
</feature>
<feature type="topological domain" description="Extracellular" evidence="2">
    <location>
        <begin position="199"/>
        <end position="228"/>
    </location>
</feature>
<feature type="transmembrane region" description="Helical" evidence="2">
    <location>
        <begin position="229"/>
        <end position="248"/>
    </location>
</feature>
<feature type="topological domain" description="Cytoplasmic" evidence="2">
    <location>
        <begin position="249"/>
        <end position="396"/>
    </location>
</feature>
<feature type="region of interest" description="Disordered" evidence="3">
    <location>
        <begin position="145"/>
        <end position="165"/>
    </location>
</feature>
<feature type="region of interest" description="Disordered" evidence="3">
    <location>
        <begin position="353"/>
        <end position="396"/>
    </location>
</feature>
<feature type="compositionally biased region" description="Basic and acidic residues" evidence="3">
    <location>
        <begin position="147"/>
        <end position="156"/>
    </location>
</feature>
<feature type="compositionally biased region" description="Polar residues" evidence="3">
    <location>
        <begin position="376"/>
        <end position="387"/>
    </location>
</feature>
<feature type="sequence conflict" description="In Ref. 2; BAG54030." evidence="4" ref="2">
    <original>T</original>
    <variation>A</variation>
    <location>
        <position position="382"/>
    </location>
</feature>
<feature type="sequence conflict" description="In Ref. 1; AAA60458 and 4; AAH96213/AAH96214/AAH96215/AAH96216." evidence="4" ref="1 4">
    <original>T</original>
    <variation>N</variation>
    <location>
        <position position="392"/>
    </location>
</feature>
<gene>
    <name type="primary">GJC1</name>
    <name type="synonym">GJA7</name>
</gene>